<name>MTAD_BACHK</name>
<proteinExistence type="inferred from homology"/>
<feature type="chain" id="PRO_0000312448" description="5-methylthioadenosine/S-adenosylhomocysteine deaminase">
    <location>
        <begin position="1"/>
        <end position="435"/>
    </location>
</feature>
<feature type="binding site" evidence="1">
    <location>
        <position position="65"/>
    </location>
    <ligand>
        <name>Zn(2+)</name>
        <dbReference type="ChEBI" id="CHEBI:29105"/>
    </ligand>
</feature>
<feature type="binding site" evidence="1">
    <location>
        <position position="67"/>
    </location>
    <ligand>
        <name>Zn(2+)</name>
        <dbReference type="ChEBI" id="CHEBI:29105"/>
    </ligand>
</feature>
<feature type="binding site" evidence="1">
    <location>
        <position position="94"/>
    </location>
    <ligand>
        <name>substrate</name>
    </ligand>
</feature>
<feature type="binding site" evidence="1">
    <location>
        <position position="150"/>
    </location>
    <ligand>
        <name>substrate</name>
    </ligand>
</feature>
<feature type="binding site" evidence="1">
    <location>
        <position position="189"/>
    </location>
    <ligand>
        <name>substrate</name>
    </ligand>
</feature>
<feature type="binding site" evidence="1">
    <location>
        <position position="216"/>
    </location>
    <ligand>
        <name>Zn(2+)</name>
        <dbReference type="ChEBI" id="CHEBI:29105"/>
    </ligand>
</feature>
<feature type="binding site" evidence="1">
    <location>
        <position position="219"/>
    </location>
    <ligand>
        <name>substrate</name>
    </ligand>
</feature>
<feature type="binding site" evidence="1">
    <location>
        <position position="304"/>
    </location>
    <ligand>
        <name>substrate</name>
    </ligand>
</feature>
<feature type="binding site" evidence="1">
    <location>
        <position position="304"/>
    </location>
    <ligand>
        <name>Zn(2+)</name>
        <dbReference type="ChEBI" id="CHEBI:29105"/>
    </ligand>
</feature>
<organism>
    <name type="scientific">Bacillus thuringiensis subsp. konkukian (strain 97-27)</name>
    <dbReference type="NCBI Taxonomy" id="281309"/>
    <lineage>
        <taxon>Bacteria</taxon>
        <taxon>Bacillati</taxon>
        <taxon>Bacillota</taxon>
        <taxon>Bacilli</taxon>
        <taxon>Bacillales</taxon>
        <taxon>Bacillaceae</taxon>
        <taxon>Bacillus</taxon>
        <taxon>Bacillus cereus group</taxon>
    </lineage>
</organism>
<comment type="function">
    <text evidence="1">Catalyzes the deamination of 5-methylthioadenosine and S-adenosyl-L-homocysteine into 5-methylthioinosine and S-inosyl-L-homocysteine, respectively. Is also able to deaminate adenosine.</text>
</comment>
<comment type="catalytic activity">
    <reaction evidence="1">
        <text>S-adenosyl-L-homocysteine + H2O + H(+) = S-inosyl-L-homocysteine + NH4(+)</text>
        <dbReference type="Rhea" id="RHEA:20716"/>
        <dbReference type="ChEBI" id="CHEBI:15377"/>
        <dbReference type="ChEBI" id="CHEBI:15378"/>
        <dbReference type="ChEBI" id="CHEBI:28938"/>
        <dbReference type="ChEBI" id="CHEBI:57856"/>
        <dbReference type="ChEBI" id="CHEBI:57985"/>
        <dbReference type="EC" id="3.5.4.28"/>
    </reaction>
</comment>
<comment type="catalytic activity">
    <reaction evidence="1">
        <text>S-methyl-5'-thioadenosine + H2O + H(+) = S-methyl-5'-thioinosine + NH4(+)</text>
        <dbReference type="Rhea" id="RHEA:25025"/>
        <dbReference type="ChEBI" id="CHEBI:15377"/>
        <dbReference type="ChEBI" id="CHEBI:15378"/>
        <dbReference type="ChEBI" id="CHEBI:17509"/>
        <dbReference type="ChEBI" id="CHEBI:28938"/>
        <dbReference type="ChEBI" id="CHEBI:48595"/>
        <dbReference type="EC" id="3.5.4.31"/>
    </reaction>
</comment>
<comment type="cofactor">
    <cofactor evidence="1">
        <name>Zn(2+)</name>
        <dbReference type="ChEBI" id="CHEBI:29105"/>
    </cofactor>
    <text evidence="1">Binds 1 zinc ion per subunit.</text>
</comment>
<comment type="similarity">
    <text evidence="1">Belongs to the metallo-dependent hydrolases superfamily. MTA/SAH deaminase family.</text>
</comment>
<dbReference type="EC" id="3.5.4.28" evidence="1"/>
<dbReference type="EC" id="3.5.4.31" evidence="1"/>
<dbReference type="EMBL" id="AE017355">
    <property type="protein sequence ID" value="AAT59611.1"/>
    <property type="molecule type" value="Genomic_DNA"/>
</dbReference>
<dbReference type="RefSeq" id="YP_036039.1">
    <property type="nucleotide sequence ID" value="NC_005957.1"/>
</dbReference>
<dbReference type="SMR" id="Q6HK87"/>
<dbReference type="KEGG" id="btk:BT9727_1707"/>
<dbReference type="PATRIC" id="fig|281309.8.peg.1797"/>
<dbReference type="HOGENOM" id="CLU_012358_2_1_9"/>
<dbReference type="Proteomes" id="UP000001301">
    <property type="component" value="Chromosome"/>
</dbReference>
<dbReference type="GO" id="GO:0090614">
    <property type="term" value="F:5'-methylthioadenosine deaminase activity"/>
    <property type="evidence" value="ECO:0007669"/>
    <property type="project" value="UniProtKB-UniRule"/>
</dbReference>
<dbReference type="GO" id="GO:0046872">
    <property type="term" value="F:metal ion binding"/>
    <property type="evidence" value="ECO:0007669"/>
    <property type="project" value="UniProtKB-KW"/>
</dbReference>
<dbReference type="GO" id="GO:0050270">
    <property type="term" value="F:S-adenosylhomocysteine deaminase activity"/>
    <property type="evidence" value="ECO:0007669"/>
    <property type="project" value="UniProtKB-UniRule"/>
</dbReference>
<dbReference type="CDD" id="cd01298">
    <property type="entry name" value="ATZ_TRZ_like"/>
    <property type="match status" value="1"/>
</dbReference>
<dbReference type="FunFam" id="3.20.20.140:FF:000014">
    <property type="entry name" value="5-methylthioadenosine/S-adenosylhomocysteine deaminase"/>
    <property type="match status" value="1"/>
</dbReference>
<dbReference type="Gene3D" id="3.20.20.140">
    <property type="entry name" value="Metal-dependent hydrolases"/>
    <property type="match status" value="1"/>
</dbReference>
<dbReference type="Gene3D" id="2.30.40.10">
    <property type="entry name" value="Urease, subunit C, domain 1"/>
    <property type="match status" value="1"/>
</dbReference>
<dbReference type="HAMAP" id="MF_01281">
    <property type="entry name" value="MTA_SAH_deamin"/>
    <property type="match status" value="1"/>
</dbReference>
<dbReference type="InterPro" id="IPR006680">
    <property type="entry name" value="Amidohydro-rel"/>
</dbReference>
<dbReference type="InterPro" id="IPR023512">
    <property type="entry name" value="Deaminase_MtaD/DadD"/>
</dbReference>
<dbReference type="InterPro" id="IPR011059">
    <property type="entry name" value="Metal-dep_hydrolase_composite"/>
</dbReference>
<dbReference type="InterPro" id="IPR032466">
    <property type="entry name" value="Metal_Hydrolase"/>
</dbReference>
<dbReference type="InterPro" id="IPR050287">
    <property type="entry name" value="MTA/SAH_deaminase"/>
</dbReference>
<dbReference type="NCBIfam" id="NF012037">
    <property type="entry name" value="PRK15493.1"/>
    <property type="match status" value="1"/>
</dbReference>
<dbReference type="PANTHER" id="PTHR43794:SF11">
    <property type="entry name" value="AMIDOHYDROLASE-RELATED DOMAIN-CONTAINING PROTEIN"/>
    <property type="match status" value="1"/>
</dbReference>
<dbReference type="PANTHER" id="PTHR43794">
    <property type="entry name" value="AMINOHYDROLASE SSNA-RELATED"/>
    <property type="match status" value="1"/>
</dbReference>
<dbReference type="Pfam" id="PF01979">
    <property type="entry name" value="Amidohydro_1"/>
    <property type="match status" value="1"/>
</dbReference>
<dbReference type="SUPFAM" id="SSF51338">
    <property type="entry name" value="Composite domain of metallo-dependent hydrolases"/>
    <property type="match status" value="1"/>
</dbReference>
<dbReference type="SUPFAM" id="SSF51556">
    <property type="entry name" value="Metallo-dependent hydrolases"/>
    <property type="match status" value="1"/>
</dbReference>
<evidence type="ECO:0000255" key="1">
    <source>
        <dbReference type="HAMAP-Rule" id="MF_01281"/>
    </source>
</evidence>
<sequence>MKTTYVNATIVTMNEQNEVIENGYIIVENDQIIDVKSGEFASDFEVDEVIDMKGKWVLPGLVNTHTHVVMSLLRGIGDDMLLQPWLETRIWPLESQFTPQIAVASTELGLLEMVKSGTTSFSDMFNPIGVDQDAIMETVSRSGMRAAVSRTLFSFGTKEDEKKAIEEAERYVKRYYNESGMLTTMVAPHSPYTCSTELLEECARIAVENRTMVHIHLSETEREVRDIEAQYGKRPVEYAASCGLFKRPTVIAHGVVLNDSERAFLAEHDVRVAHNPNSNLKLGSGIANVKAMLEAGIKVGIATDSVASNNNLDMFEEMRIATLLQKGIHQDATALPVETALTLATKGAAEVIGMKQTGSLEVGKCADFITIDPSNKPHLQPADEVLSHLVYAASGKDISDVIINGKRVVWNGECKTLDEERIIFEASRYKRGLQR</sequence>
<gene>
    <name evidence="1" type="primary">mtaD</name>
    <name type="ordered locus">BT9727_1707</name>
</gene>
<keyword id="KW-0378">Hydrolase</keyword>
<keyword id="KW-0479">Metal-binding</keyword>
<keyword id="KW-0862">Zinc</keyword>
<protein>
    <recommendedName>
        <fullName evidence="1">5-methylthioadenosine/S-adenosylhomocysteine deaminase</fullName>
        <shortName evidence="1">MTA/SAH deaminase</shortName>
        <ecNumber evidence="1">3.5.4.28</ecNumber>
        <ecNumber evidence="1">3.5.4.31</ecNumber>
    </recommendedName>
</protein>
<accession>Q6HK87</accession>
<reference key="1">
    <citation type="journal article" date="2006" name="J. Bacteriol.">
        <title>Pathogenomic sequence analysis of Bacillus cereus and Bacillus thuringiensis isolates closely related to Bacillus anthracis.</title>
        <authorList>
            <person name="Han C.S."/>
            <person name="Xie G."/>
            <person name="Challacombe J.F."/>
            <person name="Altherr M.R."/>
            <person name="Bhotika S.S."/>
            <person name="Bruce D."/>
            <person name="Campbell C.S."/>
            <person name="Campbell M.L."/>
            <person name="Chen J."/>
            <person name="Chertkov O."/>
            <person name="Cleland C."/>
            <person name="Dimitrijevic M."/>
            <person name="Doggett N.A."/>
            <person name="Fawcett J.J."/>
            <person name="Glavina T."/>
            <person name="Goodwin L.A."/>
            <person name="Hill K.K."/>
            <person name="Hitchcock P."/>
            <person name="Jackson P.J."/>
            <person name="Keim P."/>
            <person name="Kewalramani A.R."/>
            <person name="Longmire J."/>
            <person name="Lucas S."/>
            <person name="Malfatti S."/>
            <person name="McMurry K."/>
            <person name="Meincke L.J."/>
            <person name="Misra M."/>
            <person name="Moseman B.L."/>
            <person name="Mundt M."/>
            <person name="Munk A.C."/>
            <person name="Okinaka R.T."/>
            <person name="Parson-Quintana B."/>
            <person name="Reilly L.P."/>
            <person name="Richardson P."/>
            <person name="Robinson D.L."/>
            <person name="Rubin E."/>
            <person name="Saunders E."/>
            <person name="Tapia R."/>
            <person name="Tesmer J.G."/>
            <person name="Thayer N."/>
            <person name="Thompson L.S."/>
            <person name="Tice H."/>
            <person name="Ticknor L.O."/>
            <person name="Wills P.L."/>
            <person name="Brettin T.S."/>
            <person name="Gilna P."/>
        </authorList>
    </citation>
    <scope>NUCLEOTIDE SEQUENCE [LARGE SCALE GENOMIC DNA]</scope>
    <source>
        <strain>97-27</strain>
    </source>
</reference>